<accession>Q6PB51</accession>
<accession>Q8K217</accession>
<accession>Q99LL1</accession>
<comment type="function">
    <text evidence="1">Facilitates DNA repair, cell cycle progression, and cell proliferation through its interaction with CIAO2B.</text>
</comment>
<comment type="subunit">
    <text evidence="1">Interacts with CIAO2B; the interaction is direct. Interacts with MMS19; the interaction is indirect.</text>
</comment>
<comment type="subcellular location">
    <subcellularLocation>
        <location evidence="1">Cytoplasm</location>
        <location evidence="1">Cytoskeleton</location>
        <location evidence="1">Spindle</location>
    </subcellularLocation>
    <subcellularLocation>
        <location evidence="1">Nucleus</location>
    </subcellularLocation>
    <text evidence="1">Mitotic spindle.</text>
</comment>
<comment type="developmental stage">
    <text evidence="4">Firstly detected at 8.5 dpc in pharyngeal arch regions, particularly in the first arch, and in developing outflow tract (OFT) regions. Expression continued through 9.5 dpc in the cardiac outflow tract and atria, and in second heart field (SHF)-containing pharyngeal arch with additional expression in lower craniofacial regions. Also expressed in the developing outflow tract and SHF-associated pharyngeal mesoderm, with additional expression observed in pharyngeal endoderm, outflow tract endocardium and ventral neural tube populations.</text>
</comment>
<organism>
    <name type="scientific">Mus musculus</name>
    <name type="common">Mouse</name>
    <dbReference type="NCBI Taxonomy" id="10090"/>
    <lineage>
        <taxon>Eukaryota</taxon>
        <taxon>Metazoa</taxon>
        <taxon>Chordata</taxon>
        <taxon>Craniata</taxon>
        <taxon>Vertebrata</taxon>
        <taxon>Euteleostomi</taxon>
        <taxon>Mammalia</taxon>
        <taxon>Eutheria</taxon>
        <taxon>Euarchontoglires</taxon>
        <taxon>Glires</taxon>
        <taxon>Rodentia</taxon>
        <taxon>Myomorpha</taxon>
        <taxon>Muroidea</taxon>
        <taxon>Muridae</taxon>
        <taxon>Murinae</taxon>
        <taxon>Mus</taxon>
        <taxon>Mus</taxon>
    </lineage>
</organism>
<sequence length="277" mass="30427">MAALGRPFSGLPLSGSADFLQPPPAFAGRAFPPGAAGHDLAPRPGVRGAPSSPGGRTARGRVSIHCRKKHKRLAEDDECPVRKKRLTEAELGAVTDEWALGAHQGREGHGVNTCPSSLSMPSMLDVVCEEMDQTTGEPQCEVARRRLQEIEDRIIDEDEEVESDRNVSHLPSLVLSDTMKTGLKREFDEVFTKRMIESMSRPSMELVLWKPLPELLPEKPKPSSSPKNYRRESQAKHAAPGTAFPQRTEGLLEPQCADAPLYRSLEAATSTEEEMEL</sequence>
<feature type="chain" id="PRO_0000254139" description="Coiled-coil domain-containing protein 117">
    <location>
        <begin position="1"/>
        <end position="277"/>
    </location>
</feature>
<feature type="region of interest" description="Disordered" evidence="3">
    <location>
        <begin position="1"/>
        <end position="69"/>
    </location>
</feature>
<feature type="region of interest" description="Disordered" evidence="3">
    <location>
        <begin position="212"/>
        <end position="277"/>
    </location>
</feature>
<feature type="coiled-coil region" evidence="2">
    <location>
        <begin position="139"/>
        <end position="166"/>
    </location>
</feature>
<feature type="compositionally biased region" description="Low complexity" evidence="3">
    <location>
        <begin position="26"/>
        <end position="37"/>
    </location>
</feature>
<feature type="compositionally biased region" description="Basic residues" evidence="3">
    <location>
        <begin position="58"/>
        <end position="69"/>
    </location>
</feature>
<feature type="modified residue" description="Omega-N-methylarginine" evidence="7">
    <location>
        <position position="47"/>
    </location>
</feature>
<feature type="modified residue" description="Phosphoserine" evidence="1">
    <location>
        <position position="52"/>
    </location>
</feature>
<feature type="sequence conflict" description="In Ref. 2; AAH34558." evidence="5" ref="2">
    <original>L</original>
    <variation>P</variation>
    <location>
        <position position="40"/>
    </location>
</feature>
<feature type="sequence conflict" description="In Ref. 2; AAH34558." evidence="5" ref="2">
    <original>T</original>
    <variation>A</variation>
    <location>
        <position position="95"/>
    </location>
</feature>
<evidence type="ECO:0000250" key="1">
    <source>
        <dbReference type="UniProtKB" id="Q8IWD4"/>
    </source>
</evidence>
<evidence type="ECO:0000255" key="2"/>
<evidence type="ECO:0000256" key="3">
    <source>
        <dbReference type="SAM" id="MobiDB-lite"/>
    </source>
</evidence>
<evidence type="ECO:0000269" key="4">
    <source>
    </source>
</evidence>
<evidence type="ECO:0000305" key="5"/>
<evidence type="ECO:0000312" key="6">
    <source>
        <dbReference type="MGI" id="MGI:2144383"/>
    </source>
</evidence>
<evidence type="ECO:0007744" key="7">
    <source>
    </source>
</evidence>
<keyword id="KW-0175">Coiled coil</keyword>
<keyword id="KW-0963">Cytoplasm</keyword>
<keyword id="KW-0206">Cytoskeleton</keyword>
<keyword id="KW-0488">Methylation</keyword>
<keyword id="KW-0539">Nucleus</keyword>
<keyword id="KW-0597">Phosphoprotein</keyword>
<keyword id="KW-1185">Reference proteome</keyword>
<gene>
    <name evidence="6" type="primary">Ccdc117</name>
</gene>
<dbReference type="EMBL" id="AL662876">
    <property type="status" value="NOT_ANNOTATED_CDS"/>
    <property type="molecule type" value="Genomic_DNA"/>
</dbReference>
<dbReference type="EMBL" id="BC003203">
    <property type="protein sequence ID" value="AAH03203.1"/>
    <property type="molecule type" value="mRNA"/>
</dbReference>
<dbReference type="EMBL" id="BC034558">
    <property type="protein sequence ID" value="AAH34558.1"/>
    <property type="molecule type" value="mRNA"/>
</dbReference>
<dbReference type="EMBL" id="BC059888">
    <property type="protein sequence ID" value="AAH59888.1"/>
    <property type="molecule type" value="mRNA"/>
</dbReference>
<dbReference type="CCDS" id="CCDS24401.1"/>
<dbReference type="RefSeq" id="NP_598794.2">
    <property type="nucleotide sequence ID" value="NM_134033.2"/>
</dbReference>
<dbReference type="FunCoup" id="Q6PB51">
    <property type="interactions" value="1008"/>
</dbReference>
<dbReference type="STRING" id="10090.ENSMUSP00000020776"/>
<dbReference type="iPTMnet" id="Q6PB51"/>
<dbReference type="PhosphoSitePlus" id="Q6PB51"/>
<dbReference type="SwissPalm" id="Q6PB51"/>
<dbReference type="PaxDb" id="10090-ENSMUSP00000020776"/>
<dbReference type="PeptideAtlas" id="Q6PB51"/>
<dbReference type="ProteomicsDB" id="281239"/>
<dbReference type="Pumba" id="Q6PB51"/>
<dbReference type="Antibodypedia" id="226">
    <property type="antibodies" value="116 antibodies from 17 providers"/>
</dbReference>
<dbReference type="DNASU" id="104479"/>
<dbReference type="Ensembl" id="ENSMUST00000020776.5">
    <property type="protein sequence ID" value="ENSMUSP00000020776.5"/>
    <property type="gene ID" value="ENSMUSG00000020482.5"/>
</dbReference>
<dbReference type="GeneID" id="104479"/>
<dbReference type="KEGG" id="mmu:104479"/>
<dbReference type="UCSC" id="uc007hwp.2">
    <property type="organism name" value="mouse"/>
</dbReference>
<dbReference type="AGR" id="MGI:2144383"/>
<dbReference type="CTD" id="150275"/>
<dbReference type="MGI" id="MGI:2144383">
    <property type="gene designation" value="Ccdc117"/>
</dbReference>
<dbReference type="VEuPathDB" id="HostDB:ENSMUSG00000020482"/>
<dbReference type="eggNOG" id="ENOG502S42Q">
    <property type="taxonomic scope" value="Eukaryota"/>
</dbReference>
<dbReference type="GeneTree" id="ENSGT00390000005772"/>
<dbReference type="HOGENOM" id="CLU_083045_0_0_1"/>
<dbReference type="InParanoid" id="Q6PB51"/>
<dbReference type="OMA" id="NTSWERR"/>
<dbReference type="OrthoDB" id="9450632at2759"/>
<dbReference type="PhylomeDB" id="Q6PB51"/>
<dbReference type="TreeFam" id="TF335674"/>
<dbReference type="BioGRID-ORCS" id="104479">
    <property type="hits" value="2 hits in 77 CRISPR screens"/>
</dbReference>
<dbReference type="ChiTaRS" id="Ccdc117">
    <property type="organism name" value="mouse"/>
</dbReference>
<dbReference type="PRO" id="PR:Q6PB51"/>
<dbReference type="Proteomes" id="UP000000589">
    <property type="component" value="Chromosome 11"/>
</dbReference>
<dbReference type="RNAct" id="Q6PB51">
    <property type="molecule type" value="protein"/>
</dbReference>
<dbReference type="Bgee" id="ENSMUSG00000020482">
    <property type="expression patterns" value="Expressed in secondary oocyte and 221 other cell types or tissues"/>
</dbReference>
<dbReference type="GO" id="GO:0005737">
    <property type="term" value="C:cytoplasm"/>
    <property type="evidence" value="ECO:0007669"/>
    <property type="project" value="UniProtKB-KW"/>
</dbReference>
<dbReference type="GO" id="GO:0072686">
    <property type="term" value="C:mitotic spindle"/>
    <property type="evidence" value="ECO:0000250"/>
    <property type="project" value="UniProtKB"/>
</dbReference>
<dbReference type="GO" id="GO:0005634">
    <property type="term" value="C:nucleus"/>
    <property type="evidence" value="ECO:0007669"/>
    <property type="project" value="UniProtKB-SubCell"/>
</dbReference>
<dbReference type="GO" id="GO:0008284">
    <property type="term" value="P:positive regulation of cell population proliferation"/>
    <property type="evidence" value="ECO:0000250"/>
    <property type="project" value="UniProtKB"/>
</dbReference>
<dbReference type="GO" id="GO:0045739">
    <property type="term" value="P:positive regulation of DNA repair"/>
    <property type="evidence" value="ECO:0000250"/>
    <property type="project" value="UniProtKB"/>
</dbReference>
<dbReference type="InterPro" id="IPR031630">
    <property type="entry name" value="CCDC117"/>
</dbReference>
<dbReference type="PANTHER" id="PTHR36128">
    <property type="entry name" value="COILED-COIL DOMAIN-CONTAINING PROTEIN 117"/>
    <property type="match status" value="1"/>
</dbReference>
<dbReference type="PANTHER" id="PTHR36128:SF1">
    <property type="entry name" value="COILED-COIL DOMAIN-CONTAINING PROTEIN 117"/>
    <property type="match status" value="1"/>
</dbReference>
<dbReference type="Pfam" id="PF15810">
    <property type="entry name" value="CCDC117"/>
    <property type="match status" value="1"/>
</dbReference>
<name>CC117_MOUSE</name>
<reference key="1">
    <citation type="journal article" date="2009" name="PLoS Biol.">
        <title>Lineage-specific biology revealed by a finished genome assembly of the mouse.</title>
        <authorList>
            <person name="Church D.M."/>
            <person name="Goodstadt L."/>
            <person name="Hillier L.W."/>
            <person name="Zody M.C."/>
            <person name="Goldstein S."/>
            <person name="She X."/>
            <person name="Bult C.J."/>
            <person name="Agarwala R."/>
            <person name="Cherry J.L."/>
            <person name="DiCuccio M."/>
            <person name="Hlavina W."/>
            <person name="Kapustin Y."/>
            <person name="Meric P."/>
            <person name="Maglott D."/>
            <person name="Birtle Z."/>
            <person name="Marques A.C."/>
            <person name="Graves T."/>
            <person name="Zhou S."/>
            <person name="Teague B."/>
            <person name="Potamousis K."/>
            <person name="Churas C."/>
            <person name="Place M."/>
            <person name="Herschleb J."/>
            <person name="Runnheim R."/>
            <person name="Forrest D."/>
            <person name="Amos-Landgraf J."/>
            <person name="Schwartz D.C."/>
            <person name="Cheng Z."/>
            <person name="Lindblad-Toh K."/>
            <person name="Eichler E.E."/>
            <person name="Ponting C.P."/>
        </authorList>
    </citation>
    <scope>NUCLEOTIDE SEQUENCE [LARGE SCALE GENOMIC DNA]</scope>
    <source>
        <strain>C57BL/6J</strain>
    </source>
</reference>
<reference key="2">
    <citation type="journal article" date="2004" name="Genome Res.">
        <title>The status, quality, and expansion of the NIH full-length cDNA project: the Mammalian Gene Collection (MGC).</title>
        <authorList>
            <consortium name="The MGC Project Team"/>
        </authorList>
    </citation>
    <scope>NUCLEOTIDE SEQUENCE [LARGE SCALE MRNA]</scope>
    <source>
        <strain>C57BL/6J</strain>
        <strain>Czech II</strain>
        <tissue>Brain</tissue>
        <tissue>Mammary gland</tissue>
    </source>
</reference>
<reference key="3">
    <citation type="journal article" date="2010" name="Cell">
        <title>A tissue-specific atlas of mouse protein phosphorylation and expression.</title>
        <authorList>
            <person name="Huttlin E.L."/>
            <person name="Jedrychowski M.P."/>
            <person name="Elias J.E."/>
            <person name="Goswami T."/>
            <person name="Rad R."/>
            <person name="Beausoleil S.A."/>
            <person name="Villen J."/>
            <person name="Haas W."/>
            <person name="Sowa M.E."/>
            <person name="Gygi S.P."/>
        </authorList>
    </citation>
    <scope>IDENTIFICATION BY MASS SPECTROMETRY [LARGE SCALE ANALYSIS]</scope>
    <source>
        <tissue>Testis</tissue>
    </source>
</reference>
<reference key="4">
    <citation type="journal article" date="2014" name="Mol. Cell. Proteomics">
        <title>Immunoaffinity enrichment and mass spectrometry analysis of protein methylation.</title>
        <authorList>
            <person name="Guo A."/>
            <person name="Gu H."/>
            <person name="Zhou J."/>
            <person name="Mulhern D."/>
            <person name="Wang Y."/>
            <person name="Lee K.A."/>
            <person name="Yang V."/>
            <person name="Aguiar M."/>
            <person name="Kornhauser J."/>
            <person name="Jia X."/>
            <person name="Ren J."/>
            <person name="Beausoleil S.A."/>
            <person name="Silva J.C."/>
            <person name="Vemulapalli V."/>
            <person name="Bedford M.T."/>
            <person name="Comb M.J."/>
        </authorList>
    </citation>
    <scope>METHYLATION [LARGE SCALE ANALYSIS] AT ARG-47</scope>
    <scope>IDENTIFICATION BY MASS SPECTROMETRY [LARGE SCALE ANALYSIS]</scope>
    <source>
        <tissue>Embryo</tissue>
    </source>
</reference>
<reference key="5">
    <citation type="journal article" date="2019" name="Sci. Rep.">
        <title>Nkx2-5 Second Heart Field Target Gene Ccdc117 Regulates DNA Metabolism and Proliferation.</title>
        <authorList>
            <person name="Horton A.J."/>
            <person name="Brooker J."/>
            <person name="Streitfeld W.S."/>
            <person name="Flessa M.E."/>
            <person name="Pillai B."/>
            <person name="Simpson R."/>
            <person name="Clark C.D."/>
            <person name="Gooz M.B."/>
            <person name="Sutton K.K."/>
            <person name="Foley A.C."/>
            <person name="Lee K.H."/>
        </authorList>
    </citation>
    <scope>DEVELOPMENTAL STAGE</scope>
</reference>
<proteinExistence type="evidence at protein level"/>
<protein>
    <recommendedName>
        <fullName evidence="5">Coiled-coil domain-containing protein 117</fullName>
    </recommendedName>
</protein>